<feature type="transit peptide" description="Mitochondrion" evidence="3">
    <location>
        <begin position="1"/>
        <end position="36"/>
    </location>
</feature>
<feature type="chain" id="PRO_0000410992" description="Acyl carrier protein 2, mitochondrial">
    <location>
        <begin position="37"/>
        <end position="126"/>
    </location>
</feature>
<feature type="domain" description="Carrier" evidence="2">
    <location>
        <begin position="48"/>
        <end position="123"/>
    </location>
</feature>
<feature type="modified residue" description="O-(pantetheine 4'-phosphoryl)serine" evidence="2">
    <location>
        <position position="83"/>
    </location>
</feature>
<feature type="sequence conflict" description="In Ref. 3; AAM62469." evidence="4" ref="3">
    <original>M</original>
    <variation>L</variation>
    <location>
        <position position="7"/>
    </location>
</feature>
<feature type="helix" evidence="7">
    <location>
        <begin position="47"/>
        <end position="59"/>
    </location>
</feature>
<feature type="strand" evidence="7">
    <location>
        <begin position="61"/>
        <end position="63"/>
    </location>
</feature>
<feature type="turn" evidence="6">
    <location>
        <begin position="66"/>
        <end position="68"/>
    </location>
</feature>
<feature type="strand" evidence="6">
    <location>
        <begin position="70"/>
        <end position="72"/>
    </location>
</feature>
<feature type="helix" evidence="7">
    <location>
        <begin position="75"/>
        <end position="79"/>
    </location>
</feature>
<feature type="helix" evidence="7">
    <location>
        <begin position="83"/>
        <end position="97"/>
    </location>
</feature>
<feature type="helix" evidence="7">
    <location>
        <begin position="103"/>
        <end position="106"/>
    </location>
</feature>
<feature type="helix" evidence="7">
    <location>
        <begin position="112"/>
        <end position="119"/>
    </location>
</feature>
<protein>
    <recommendedName>
        <fullName>Acyl carrier protein 2, mitochondrial</fullName>
    </recommendedName>
    <alternativeName>
        <fullName>MtACP-2</fullName>
        <shortName>ACP</shortName>
    </alternativeName>
    <alternativeName>
        <fullName>NADH-ubiquinone oxidoreductase 9.6 kDa subunit</fullName>
    </alternativeName>
</protein>
<reference key="1">
    <citation type="journal article" date="2000" name="Nature">
        <title>Sequence and analysis of chromosome 1 of the plant Arabidopsis thaliana.</title>
        <authorList>
            <person name="Theologis A."/>
            <person name="Ecker J.R."/>
            <person name="Palm C.J."/>
            <person name="Federspiel N.A."/>
            <person name="Kaul S."/>
            <person name="White O."/>
            <person name="Alonso J."/>
            <person name="Altafi H."/>
            <person name="Araujo R."/>
            <person name="Bowman C.L."/>
            <person name="Brooks S.Y."/>
            <person name="Buehler E."/>
            <person name="Chan A."/>
            <person name="Chao Q."/>
            <person name="Chen H."/>
            <person name="Cheuk R.F."/>
            <person name="Chin C.W."/>
            <person name="Chung M.K."/>
            <person name="Conn L."/>
            <person name="Conway A.B."/>
            <person name="Conway A.R."/>
            <person name="Creasy T.H."/>
            <person name="Dewar K."/>
            <person name="Dunn P."/>
            <person name="Etgu P."/>
            <person name="Feldblyum T.V."/>
            <person name="Feng J.-D."/>
            <person name="Fong B."/>
            <person name="Fujii C.Y."/>
            <person name="Gill J.E."/>
            <person name="Goldsmith A.D."/>
            <person name="Haas B."/>
            <person name="Hansen N.F."/>
            <person name="Hughes B."/>
            <person name="Huizar L."/>
            <person name="Hunter J.L."/>
            <person name="Jenkins J."/>
            <person name="Johnson-Hopson C."/>
            <person name="Khan S."/>
            <person name="Khaykin E."/>
            <person name="Kim C.J."/>
            <person name="Koo H.L."/>
            <person name="Kremenetskaia I."/>
            <person name="Kurtz D.B."/>
            <person name="Kwan A."/>
            <person name="Lam B."/>
            <person name="Langin-Hooper S."/>
            <person name="Lee A."/>
            <person name="Lee J.M."/>
            <person name="Lenz C.A."/>
            <person name="Li J.H."/>
            <person name="Li Y.-P."/>
            <person name="Lin X."/>
            <person name="Liu S.X."/>
            <person name="Liu Z.A."/>
            <person name="Luros J.S."/>
            <person name="Maiti R."/>
            <person name="Marziali A."/>
            <person name="Militscher J."/>
            <person name="Miranda M."/>
            <person name="Nguyen M."/>
            <person name="Nierman W.C."/>
            <person name="Osborne B.I."/>
            <person name="Pai G."/>
            <person name="Peterson J."/>
            <person name="Pham P.K."/>
            <person name="Rizzo M."/>
            <person name="Rooney T."/>
            <person name="Rowley D."/>
            <person name="Sakano H."/>
            <person name="Salzberg S.L."/>
            <person name="Schwartz J.R."/>
            <person name="Shinn P."/>
            <person name="Southwick A.M."/>
            <person name="Sun H."/>
            <person name="Tallon L.J."/>
            <person name="Tambunga G."/>
            <person name="Toriumi M.J."/>
            <person name="Town C.D."/>
            <person name="Utterback T."/>
            <person name="Van Aken S."/>
            <person name="Vaysberg M."/>
            <person name="Vysotskaia V.S."/>
            <person name="Walker M."/>
            <person name="Wu D."/>
            <person name="Yu G."/>
            <person name="Fraser C.M."/>
            <person name="Venter J.C."/>
            <person name="Davis R.W."/>
        </authorList>
    </citation>
    <scope>NUCLEOTIDE SEQUENCE [LARGE SCALE GENOMIC DNA]</scope>
    <source>
        <strain>cv. Columbia</strain>
    </source>
</reference>
<reference key="2">
    <citation type="journal article" date="2017" name="Plant J.">
        <title>Araport11: a complete reannotation of the Arabidopsis thaliana reference genome.</title>
        <authorList>
            <person name="Cheng C.Y."/>
            <person name="Krishnakumar V."/>
            <person name="Chan A.P."/>
            <person name="Thibaud-Nissen F."/>
            <person name="Schobel S."/>
            <person name="Town C.D."/>
        </authorList>
    </citation>
    <scope>GENOME REANNOTATION</scope>
    <source>
        <strain>cv. Columbia</strain>
    </source>
</reference>
<reference key="3">
    <citation type="submission" date="2002-03" db="EMBL/GenBank/DDBJ databases">
        <title>Full-length cDNA from Arabidopsis thaliana.</title>
        <authorList>
            <person name="Brover V.V."/>
            <person name="Troukhan M.E."/>
            <person name="Alexandrov N.A."/>
            <person name="Lu Y.-P."/>
            <person name="Flavell R.B."/>
            <person name="Feldmann K.A."/>
        </authorList>
    </citation>
    <scope>NUCLEOTIDE SEQUENCE [LARGE SCALE MRNA]</scope>
</reference>
<reference key="4">
    <citation type="journal article" date="2015" name="J. Exp. Bot.">
        <title>Identification of cleavage sites and substrate proteins for two mitochondrial intermediate peptidases in Arabidopsis thaliana.</title>
        <authorList>
            <person name="Carrie C."/>
            <person name="Venne A.S."/>
            <person name="Zahedi R.P."/>
            <person name="Soll J."/>
        </authorList>
    </citation>
    <scope>IDENTIFICATION BY MASS SPECTROMETRY</scope>
    <scope>CLEAVAGE OF TRANSIT PEPTIDE AFTER PHE-36</scope>
</reference>
<sequence length="126" mass="14167">MAARGAMLRYLRVNVNPTIQNPRECVLPFSILLRRFSEEVRGSFLDKSEVTDRVLSVVKNFQKVDPSKVTPKANFQNDLGLDSLDSVEVVMALEEEFGFEIPDNEADKIQSIDLAVDFIASHPQAK</sequence>
<dbReference type="EMBL" id="AC004512">
    <property type="protein sequence ID" value="AAC27139.1"/>
    <property type="molecule type" value="Genomic_DNA"/>
</dbReference>
<dbReference type="EMBL" id="CP002684">
    <property type="protein sequence ID" value="AEE34354.1"/>
    <property type="molecule type" value="Genomic_DNA"/>
</dbReference>
<dbReference type="EMBL" id="AY085236">
    <property type="protein sequence ID" value="AAM62469.1"/>
    <property type="molecule type" value="mRNA"/>
</dbReference>
<dbReference type="PIR" id="T02351">
    <property type="entry name" value="T02351"/>
</dbReference>
<dbReference type="RefSeq" id="NP_176708.1">
    <property type="nucleotide sequence ID" value="NM_105202.5"/>
</dbReference>
<dbReference type="PDB" id="7A23">
    <property type="method" value="EM"/>
    <property type="resolution" value="3.70 A"/>
    <property type="chains" value="e=1-126"/>
</dbReference>
<dbReference type="PDB" id="7AQR">
    <property type="method" value="EM"/>
    <property type="resolution" value="2.91 A"/>
    <property type="chains" value="U=1-126"/>
</dbReference>
<dbReference type="PDB" id="7AR7">
    <property type="method" value="EM"/>
    <property type="resolution" value="3.72 A"/>
    <property type="chains" value="U=44-126"/>
</dbReference>
<dbReference type="PDB" id="7AR8">
    <property type="method" value="EM"/>
    <property type="resolution" value="3.53 A"/>
    <property type="chains" value="U=1-126"/>
</dbReference>
<dbReference type="PDB" id="7ARB">
    <property type="method" value="EM"/>
    <property type="resolution" value="3.41 A"/>
    <property type="chains" value="U=1-126"/>
</dbReference>
<dbReference type="PDB" id="8BEE">
    <property type="method" value="EM"/>
    <property type="resolution" value="2.04 A"/>
    <property type="chains" value="U=1-126"/>
</dbReference>
<dbReference type="PDB" id="8BPX">
    <property type="method" value="EM"/>
    <property type="resolution" value="2.09 A"/>
    <property type="chains" value="U=1-126"/>
</dbReference>
<dbReference type="PDB" id="8BQ5">
    <property type="method" value="EM"/>
    <property type="resolution" value="2.73 A"/>
    <property type="chains" value="U=1-126"/>
</dbReference>
<dbReference type="PDB" id="8BQ6">
    <property type="method" value="EM"/>
    <property type="resolution" value="2.80 A"/>
    <property type="chains" value="U=1-126"/>
</dbReference>
<dbReference type="PDBsum" id="7A23"/>
<dbReference type="PDBsum" id="7AQR"/>
<dbReference type="PDBsum" id="7AR7"/>
<dbReference type="PDBsum" id="7AR8"/>
<dbReference type="PDBsum" id="7ARB"/>
<dbReference type="PDBsum" id="8BEE"/>
<dbReference type="PDBsum" id="8BPX"/>
<dbReference type="PDBsum" id="8BQ5"/>
<dbReference type="PDBsum" id="8BQ6"/>
<dbReference type="EMDB" id="EMD-11873"/>
<dbReference type="EMDB" id="EMD-11875"/>
<dbReference type="EMDB" id="EMD-11876"/>
<dbReference type="EMDB" id="EMD-11878"/>
<dbReference type="EMDB" id="EMD-15999"/>
<dbReference type="EMDB" id="EMD-16168"/>
<dbReference type="EMDB" id="EMD-16171"/>
<dbReference type="EMDB" id="EMD-16172"/>
<dbReference type="SMR" id="O80800"/>
<dbReference type="BioGRID" id="28057">
    <property type="interactions" value="1"/>
</dbReference>
<dbReference type="FunCoup" id="O80800">
    <property type="interactions" value="2947"/>
</dbReference>
<dbReference type="IntAct" id="O80800">
    <property type="interactions" value="1"/>
</dbReference>
<dbReference type="STRING" id="3702.O80800"/>
<dbReference type="TCDB" id="3.D.1.6.3">
    <property type="family name" value="the h+ or na+-translocating nadh dehydrogenase (ndh) family"/>
</dbReference>
<dbReference type="PaxDb" id="3702-AT1G65290.1"/>
<dbReference type="ProteomicsDB" id="244501"/>
<dbReference type="EnsemblPlants" id="AT1G65290.1">
    <property type="protein sequence ID" value="AT1G65290.1"/>
    <property type="gene ID" value="AT1G65290"/>
</dbReference>
<dbReference type="GeneID" id="842836"/>
<dbReference type="Gramene" id="AT1G65290.1">
    <property type="protein sequence ID" value="AT1G65290.1"/>
    <property type="gene ID" value="AT1G65290"/>
</dbReference>
<dbReference type="KEGG" id="ath:AT1G65290"/>
<dbReference type="Araport" id="AT1G65290"/>
<dbReference type="TAIR" id="AT1G65290">
    <property type="gene designation" value="MTACP2"/>
</dbReference>
<dbReference type="eggNOG" id="KOG1748">
    <property type="taxonomic scope" value="Eukaryota"/>
</dbReference>
<dbReference type="HOGENOM" id="CLU_108696_0_3_1"/>
<dbReference type="InParanoid" id="O80800"/>
<dbReference type="OMA" id="EYILPYK"/>
<dbReference type="PhylomeDB" id="O80800"/>
<dbReference type="UniPathway" id="UPA00094"/>
<dbReference type="PRO" id="PR:O80800"/>
<dbReference type="Proteomes" id="UP000006548">
    <property type="component" value="Chromosome 1"/>
</dbReference>
<dbReference type="ExpressionAtlas" id="O80800">
    <property type="expression patterns" value="baseline and differential"/>
</dbReference>
<dbReference type="GO" id="GO:0005829">
    <property type="term" value="C:cytosol"/>
    <property type="evidence" value="ECO:0007005"/>
    <property type="project" value="TAIR"/>
</dbReference>
<dbReference type="GO" id="GO:0005759">
    <property type="term" value="C:mitochondrial matrix"/>
    <property type="evidence" value="ECO:0000314"/>
    <property type="project" value="TAIR"/>
</dbReference>
<dbReference type="GO" id="GO:0005739">
    <property type="term" value="C:mitochondrion"/>
    <property type="evidence" value="ECO:0000314"/>
    <property type="project" value="TAIR"/>
</dbReference>
<dbReference type="GO" id="GO:0005634">
    <property type="term" value="C:nucleus"/>
    <property type="evidence" value="ECO:0007005"/>
    <property type="project" value="TAIR"/>
</dbReference>
<dbReference type="GO" id="GO:0000036">
    <property type="term" value="F:acyl carrier activity"/>
    <property type="evidence" value="ECO:0000315"/>
    <property type="project" value="TAIR"/>
</dbReference>
<dbReference type="GO" id="GO:0050897">
    <property type="term" value="F:cobalt ion binding"/>
    <property type="evidence" value="ECO:0007005"/>
    <property type="project" value="TAIR"/>
</dbReference>
<dbReference type="GO" id="GO:0046872">
    <property type="term" value="F:metal ion binding"/>
    <property type="evidence" value="ECO:0000314"/>
    <property type="project" value="TAIR"/>
</dbReference>
<dbReference type="GO" id="GO:0006120">
    <property type="term" value="P:mitochondrial electron transport, NADH to ubiquinone"/>
    <property type="evidence" value="ECO:0000314"/>
    <property type="project" value="TAIR"/>
</dbReference>
<dbReference type="GO" id="GO:1902600">
    <property type="term" value="P:proton transmembrane transport"/>
    <property type="evidence" value="ECO:0007669"/>
    <property type="project" value="GOC"/>
</dbReference>
<dbReference type="FunFam" id="1.10.1200.10:FF:000003">
    <property type="entry name" value="Acyl carrier protein"/>
    <property type="match status" value="1"/>
</dbReference>
<dbReference type="Gene3D" id="1.10.1200.10">
    <property type="entry name" value="ACP-like"/>
    <property type="match status" value="1"/>
</dbReference>
<dbReference type="HAMAP" id="MF_01217">
    <property type="entry name" value="Acyl_carrier"/>
    <property type="match status" value="1"/>
</dbReference>
<dbReference type="InterPro" id="IPR003231">
    <property type="entry name" value="ACP"/>
</dbReference>
<dbReference type="InterPro" id="IPR036736">
    <property type="entry name" value="ACP-like_sf"/>
</dbReference>
<dbReference type="InterPro" id="IPR009081">
    <property type="entry name" value="PP-bd_ACP"/>
</dbReference>
<dbReference type="InterPro" id="IPR006162">
    <property type="entry name" value="Ppantetheine_attach_site"/>
</dbReference>
<dbReference type="NCBIfam" id="TIGR00517">
    <property type="entry name" value="acyl_carrier"/>
    <property type="match status" value="1"/>
</dbReference>
<dbReference type="NCBIfam" id="NF002148">
    <property type="entry name" value="PRK00982.1-2"/>
    <property type="match status" value="1"/>
</dbReference>
<dbReference type="NCBIfam" id="NF002150">
    <property type="entry name" value="PRK00982.1-4"/>
    <property type="match status" value="1"/>
</dbReference>
<dbReference type="PANTHER" id="PTHR20863">
    <property type="entry name" value="ACYL CARRIER PROTEIN"/>
    <property type="match status" value="1"/>
</dbReference>
<dbReference type="PANTHER" id="PTHR20863:SF71">
    <property type="entry name" value="ACYL CARRIER PROTEIN 2, MITOCHONDRIAL"/>
    <property type="match status" value="1"/>
</dbReference>
<dbReference type="Pfam" id="PF00550">
    <property type="entry name" value="PP-binding"/>
    <property type="match status" value="1"/>
</dbReference>
<dbReference type="SUPFAM" id="SSF47336">
    <property type="entry name" value="ACP-like"/>
    <property type="match status" value="1"/>
</dbReference>
<dbReference type="PROSITE" id="PS50075">
    <property type="entry name" value="CARRIER"/>
    <property type="match status" value="1"/>
</dbReference>
<dbReference type="PROSITE" id="PS00012">
    <property type="entry name" value="PHOSPHOPANTETHEINE"/>
    <property type="match status" value="1"/>
</dbReference>
<organism>
    <name type="scientific">Arabidopsis thaliana</name>
    <name type="common">Mouse-ear cress</name>
    <dbReference type="NCBI Taxonomy" id="3702"/>
    <lineage>
        <taxon>Eukaryota</taxon>
        <taxon>Viridiplantae</taxon>
        <taxon>Streptophyta</taxon>
        <taxon>Embryophyta</taxon>
        <taxon>Tracheophyta</taxon>
        <taxon>Spermatophyta</taxon>
        <taxon>Magnoliopsida</taxon>
        <taxon>eudicotyledons</taxon>
        <taxon>Gunneridae</taxon>
        <taxon>Pentapetalae</taxon>
        <taxon>rosids</taxon>
        <taxon>malvids</taxon>
        <taxon>Brassicales</taxon>
        <taxon>Brassicaceae</taxon>
        <taxon>Camelineae</taxon>
        <taxon>Arabidopsis</taxon>
    </lineage>
</organism>
<proteinExistence type="evidence at protein level"/>
<comment type="function">
    <text evidence="1">Carrier of the growing fatty acid chain in fatty acid biosynthesis (By similarity). May be involved in the synthesis of short and medium chain fatty acids. Accessory and non-catalytic subunit of the mitochondrial membrane respiratory chain NADH dehydrogenase (Complex I), which functions in the transfer of electrons from NADH to the respiratory chain (By similarity).</text>
</comment>
<comment type="pathway">
    <text>Lipid metabolism; fatty acid biosynthesis.</text>
</comment>
<comment type="subunit">
    <text>Complex I is composed of at least 49 different subunits.</text>
</comment>
<comment type="interaction">
    <interactant intactId="EBI-2298689">
        <id>O80800</id>
    </interactant>
    <interactant intactId="EBI-979321">
        <id>Q39016</id>
        <label>CPK11</label>
    </interactant>
    <organismsDiffer>false</organismsDiffer>
    <experiments>4</experiments>
</comment>
<comment type="subcellular location">
    <subcellularLocation>
        <location evidence="5">Mitochondrion</location>
    </subcellularLocation>
</comment>
<comment type="PTM">
    <text evidence="4">4'-phosphopantetheine is transferred from CoA to a specific serine of the apo-ACP-like protein.</text>
</comment>
<comment type="similarity">
    <text evidence="4">Belongs to the acyl carrier protein (ACP) family.</text>
</comment>
<accession>O80800</accession>
<accession>Q8LEU1</accession>
<keyword id="KW-0002">3D-structure</keyword>
<keyword id="KW-0249">Electron transport</keyword>
<keyword id="KW-0275">Fatty acid biosynthesis</keyword>
<keyword id="KW-0276">Fatty acid metabolism</keyword>
<keyword id="KW-0444">Lipid biosynthesis</keyword>
<keyword id="KW-0443">Lipid metabolism</keyword>
<keyword id="KW-0496">Mitochondrion</keyword>
<keyword id="KW-0596">Phosphopantetheine</keyword>
<keyword id="KW-0597">Phosphoprotein</keyword>
<keyword id="KW-1185">Reference proteome</keyword>
<keyword id="KW-0679">Respiratory chain</keyword>
<keyword id="KW-0809">Transit peptide</keyword>
<keyword id="KW-0813">Transport</keyword>
<gene>
    <name type="primary">MTACP2</name>
    <name type="ordered locus">At1g65290</name>
    <name type="ORF">T8F5.6</name>
</gene>
<evidence type="ECO:0000250" key="1"/>
<evidence type="ECO:0000255" key="2">
    <source>
        <dbReference type="PROSITE-ProRule" id="PRU00258"/>
    </source>
</evidence>
<evidence type="ECO:0000269" key="3">
    <source>
    </source>
</evidence>
<evidence type="ECO:0000305" key="4"/>
<evidence type="ECO:0000305" key="5">
    <source>
    </source>
</evidence>
<evidence type="ECO:0007829" key="6">
    <source>
        <dbReference type="PDB" id="7AQR"/>
    </source>
</evidence>
<evidence type="ECO:0007829" key="7">
    <source>
        <dbReference type="PDB" id="8BEE"/>
    </source>
</evidence>
<name>ACPM2_ARATH</name>